<sequence length="389" mass="46172">MNIEYPYSIHIIDKNKVPIYDQGNLFHTEKSSRLSHVSRGLLDHLFTFSSDNTERVRKLHILADYLYLLESERESYKNEWISLKDQVSLLQKQNSELRARIATNKEIIEGLREPVKKPIYTTQDKERLRVFFCEERSMEYIYYHIKRLAQQSYYSHLNNLQKDCEPFRGVYMSFLTNVKFLVLCEAGYWTVPDIETNTTESILSLSQKKGEDLLQKGVVIFNELEGGYQLSPRFIGDLYAHGFIKQINFTTKVPEGLPPIIAEKLQDYKFPGSNTVLIEREIPRWNFNEMKRETQMRTNLYIFKNYRCFYGYSPLRPYEPITPEEFGFDYYSWENMVDEDEGEVVYISKYTKIIKVTKEHAWAWPEHDGDTMSCTTSIEDEWIHRMDNA</sequence>
<accession>P27501</accession>
<accession>P27531</accession>
<evidence type="ECO:0000305" key="1"/>
<name>P4_RTBVP</name>
<organism>
    <name type="scientific">Rice tungro bacilliform virus (isolate Philippines)</name>
    <name type="common">RTBV</name>
    <dbReference type="NCBI Taxonomy" id="10655"/>
    <lineage>
        <taxon>Viruses</taxon>
        <taxon>Riboviria</taxon>
        <taxon>Pararnavirae</taxon>
        <taxon>Artverviricota</taxon>
        <taxon>Revtraviricetes</taxon>
        <taxon>Ortervirales</taxon>
        <taxon>Caulimoviridae</taxon>
        <taxon>Tungrovirus</taxon>
        <taxon>Tungrovirus oryzae</taxon>
    </lineage>
</organism>
<reference key="1">
    <citation type="journal article" date="1991" name="Nucleic Acids Res.">
        <title>An analysis of the sequence of an infectious clone of rice tungro bacilliform virus, a plant pararetrovirus.</title>
        <authorList>
            <person name="Hay J.M."/>
            <person name="Jones M.C."/>
            <person name="Blakebrough M.L."/>
            <person name="Dasgupta I."/>
            <person name="Davies J.W."/>
            <person name="Hull R."/>
        </authorList>
    </citation>
    <scope>NUCLEOTIDE SEQUENCE [GENOMIC DNA]</scope>
</reference>
<reference key="2">
    <citation type="journal article" date="1991" name="Virology">
        <title>Characterization of the genome of rice tungro bacilliform virus: comparison with Commelina yellow mottle virus and caulimoviruses.</title>
        <authorList>
            <person name="Qu R.D."/>
            <person name="Bhattacharyya M."/>
            <person name="Laco G.S."/>
            <person name="de Kochko A."/>
            <person name="Rao B.L.S."/>
            <person name="Kaniewska M.B."/>
            <person name="Elmer J.S."/>
            <person name="Rochester D.E."/>
            <person name="Smith C.E."/>
            <person name="Beachy R.N."/>
        </authorList>
    </citation>
    <scope>NUCLEOTIDE SEQUENCE [GENOMIC DNA]</scope>
</reference>
<proteinExistence type="predicted"/>
<feature type="chain" id="PRO_0000066387" description="Protein P4">
    <location>
        <begin position="1"/>
        <end position="389"/>
    </location>
</feature>
<feature type="sequence conflict" description="In Ref. 2; AAB03095." evidence="1" ref="2">
    <original>N</original>
    <variation>K</variation>
    <location>
        <position position="159"/>
    </location>
</feature>
<protein>
    <recommendedName>
        <fullName>Protein P4</fullName>
    </recommendedName>
    <alternativeName>
        <fullName>ORF 4</fullName>
    </alternativeName>
    <alternativeName>
        <fullName>P46</fullName>
    </alternativeName>
</protein>
<keyword id="KW-1185">Reference proteome</keyword>
<dbReference type="EMBL" id="X57924">
    <property type="protein sequence ID" value="CAA40998.1"/>
    <property type="molecule type" value="Genomic_DNA"/>
</dbReference>
<dbReference type="EMBL" id="M65026">
    <property type="protein sequence ID" value="AAB03095.1"/>
    <property type="molecule type" value="Genomic_DNA"/>
</dbReference>
<dbReference type="PIR" id="D40785">
    <property type="entry name" value="D40785"/>
</dbReference>
<dbReference type="RefSeq" id="NP_056763.1">
    <property type="nucleotide sequence ID" value="NC_001914.1"/>
</dbReference>
<dbReference type="SMR" id="P27501"/>
<dbReference type="GeneID" id="1489559"/>
<dbReference type="KEGG" id="vg:1489559"/>
<dbReference type="Proteomes" id="UP000002246">
    <property type="component" value="Segment"/>
</dbReference>
<dbReference type="InterPro" id="IPR009347">
    <property type="entry name" value="RTBV_P46"/>
</dbReference>
<dbReference type="Pfam" id="PF06216">
    <property type="entry name" value="RTBV_P46"/>
    <property type="match status" value="1"/>
</dbReference>
<organismHost>
    <name type="scientific">Oryza sativa</name>
    <name type="common">Rice</name>
    <dbReference type="NCBI Taxonomy" id="4530"/>
</organismHost>